<protein>
    <recommendedName>
        <fullName>Putative pro-MCH-like protein 1</fullName>
    </recommendedName>
    <alternativeName>
        <fullName>Pro-MCH variant</fullName>
    </alternativeName>
    <alternativeName>
        <fullName>Pro-melanin-concentrating hormone-like protein 1</fullName>
    </alternativeName>
</protein>
<evidence type="ECO:0000256" key="1">
    <source>
        <dbReference type="SAM" id="MobiDB-lite"/>
    </source>
</evidence>
<evidence type="ECO:0000269" key="2">
    <source>
    </source>
</evidence>
<evidence type="ECO:0000269" key="3">
    <source>
    </source>
</evidence>
<evidence type="ECO:0000305" key="4"/>
<name>MCHL1_HUMAN</name>
<gene>
    <name type="primary">PMCHL1</name>
</gene>
<accession>Q16048</accession>
<accession>Q9BQ10</accession>
<reference key="1">
    <citation type="journal article" date="2001" name="Science">
        <title>Birth of two chimeric genes in the Hominidae lineage.</title>
        <authorList>
            <person name="Courseaux A."/>
            <person name="Nahon J.-L."/>
        </authorList>
    </citation>
    <scope>NUCLEOTIDE SEQUENCE [GENOMIC DNA / MRNA]</scope>
    <source>
        <tissue>Testis</tissue>
    </source>
</reference>
<reference key="2">
    <citation type="journal article" date="1993" name="Brain Res. Mol. Brain Res.">
        <title>Isolation and characterization of the human melanin-concentrating hormone gene and a variant gene.</title>
        <authorList>
            <person name="Breton C."/>
            <person name="Schorpp M."/>
            <person name="Nahon J.-L."/>
        </authorList>
    </citation>
    <scope>NUCLEOTIDE SEQUENCE [GENOMIC DNA] OF 9-86</scope>
    <source>
        <tissue>Brain</tissue>
    </source>
</reference>
<reference key="3">
    <citation type="journal article" date="1998" name="Brain Res.">
        <title>Antisense expression of the human pro-melanin-concentrating hormone genes.</title>
        <authorList>
            <person name="Miller C.L."/>
            <person name="Burmeister M."/>
            <person name="Thompson R.C."/>
        </authorList>
    </citation>
    <scope>TISSUE SPECIFICITY</scope>
</reference>
<reference key="4">
    <citation type="journal article" date="2000" name="Mol. Biol. Evol.">
        <title>Structure and expression of the variant melanin-concentrating hormone genes: only PMCHL1 is transcribed in the developing human brain and encodes a putative protein.</title>
        <authorList>
            <person name="Viale A."/>
            <person name="Courseaux A."/>
            <person name="Presse F."/>
            <person name="Ortola C."/>
            <person name="Breton C."/>
            <person name="Jordan D."/>
            <person name="Nahon J.-L."/>
        </authorList>
    </citation>
    <scope>TISSUE SPECIFICITY</scope>
    <scope>DEVELOPMENTAL STAGE</scope>
</reference>
<dbReference type="EMBL" id="AY008411">
    <property type="protein sequence ID" value="AAK31295.1"/>
    <property type="molecule type" value="mRNA"/>
</dbReference>
<dbReference type="EMBL" id="AY028318">
    <property type="protein sequence ID" value="AAK31289.1"/>
    <property type="molecule type" value="Genomic_DNA"/>
</dbReference>
<dbReference type="EMBL" id="S64288">
    <property type="protein sequence ID" value="AAB27494.1"/>
    <property type="molecule type" value="Genomic_DNA"/>
</dbReference>
<dbReference type="PIR" id="I52634">
    <property type="entry name" value="I52634"/>
</dbReference>
<dbReference type="SMR" id="Q16048"/>
<dbReference type="FunCoup" id="Q16048">
    <property type="interactions" value="2"/>
</dbReference>
<dbReference type="BioMuta" id="HGNC:9110"/>
<dbReference type="DMDM" id="59799837"/>
<dbReference type="MassIVE" id="Q16048"/>
<dbReference type="AGR" id="HGNC:9110"/>
<dbReference type="GeneCards" id="PMCHL1"/>
<dbReference type="HGNC" id="HGNC:9110">
    <property type="gene designation" value="PMCHL1"/>
</dbReference>
<dbReference type="MIM" id="176793">
    <property type="type" value="gene"/>
</dbReference>
<dbReference type="neXtProt" id="NX_Q16048"/>
<dbReference type="InParanoid" id="Q16048"/>
<dbReference type="PAN-GO" id="Q16048">
    <property type="GO annotations" value="2 GO annotations based on evolutionary models"/>
</dbReference>
<dbReference type="PhylomeDB" id="Q16048"/>
<dbReference type="PathwayCommons" id="Q16048"/>
<dbReference type="Pharos" id="Q16048">
    <property type="development level" value="Tdark"/>
</dbReference>
<dbReference type="PRO" id="PR:Q16048"/>
<dbReference type="Proteomes" id="UP000005640">
    <property type="component" value="Unplaced"/>
</dbReference>
<dbReference type="RNAct" id="Q16048">
    <property type="molecule type" value="protein"/>
</dbReference>
<dbReference type="GO" id="GO:0005576">
    <property type="term" value="C:extracellular region"/>
    <property type="evidence" value="ECO:0000303"/>
    <property type="project" value="UniProtKB"/>
</dbReference>
<dbReference type="GO" id="GO:0045202">
    <property type="term" value="C:synapse"/>
    <property type="evidence" value="ECO:0007669"/>
    <property type="project" value="GOC"/>
</dbReference>
<dbReference type="GO" id="GO:0030354">
    <property type="term" value="F:melanin-concentrating hormone activity"/>
    <property type="evidence" value="ECO:0007669"/>
    <property type="project" value="InterPro"/>
</dbReference>
<dbReference type="GO" id="GO:0031777">
    <property type="term" value="F:type 1 melanin-concentrating hormone receptor binding"/>
    <property type="evidence" value="ECO:0000318"/>
    <property type="project" value="GO_Central"/>
</dbReference>
<dbReference type="GO" id="GO:0007268">
    <property type="term" value="P:chemical synaptic transmission"/>
    <property type="evidence" value="ECO:0007669"/>
    <property type="project" value="InterPro"/>
</dbReference>
<dbReference type="GO" id="GO:0032227">
    <property type="term" value="P:negative regulation of synaptic transmission, dopaminergic"/>
    <property type="evidence" value="ECO:0000318"/>
    <property type="project" value="GO_Central"/>
</dbReference>
<dbReference type="InterPro" id="IPR005456">
    <property type="entry name" value="Prepro-melanin_conc_hormone"/>
</dbReference>
<dbReference type="PANTHER" id="PTHR12091">
    <property type="entry name" value="MELANIN-CONCENTRATING HORMONE"/>
    <property type="match status" value="1"/>
</dbReference>
<dbReference type="PANTHER" id="PTHR12091:SF1">
    <property type="entry name" value="PRO-MCH-LIKE PROTEIN 1-RELATED"/>
    <property type="match status" value="1"/>
</dbReference>
<dbReference type="Pfam" id="PF05824">
    <property type="entry name" value="Pro-MCH"/>
    <property type="match status" value="1"/>
</dbReference>
<dbReference type="PRINTS" id="PR01641">
    <property type="entry name" value="PROMCHFAMILY"/>
</dbReference>
<keyword id="KW-1185">Reference proteome</keyword>
<sequence length="86" mass="9715">MLSQKPKKKHNFLNHGLSLNLVIKPYLALEGSVAFPAENGVQDTESTQEKRETGDEENSAKFPVGRRDFDTLSCMLGRVYQSCWQV</sequence>
<comment type="tissue specificity">
    <text evidence="2 3">Expressed in testis and brain.</text>
</comment>
<comment type="developmental stage">
    <text evidence="2">Expressed in developing brain, found in fetal newborn and adult brain.</text>
</comment>
<comment type="similarity">
    <text evidence="4">Belongs to the melanin-concentrating hormone family.</text>
</comment>
<comment type="caution">
    <text evidence="4">Could be the product of a pseudogene. PubMed:9729295 reported that PMCHL1 mRNA may not be used as template for translation as only antisense PMCHL1 transcripts are present in brain.</text>
</comment>
<feature type="chain" id="PRO_0000158268" description="Putative pro-MCH-like protein 1">
    <location>
        <begin position="1"/>
        <end position="86"/>
    </location>
</feature>
<feature type="region of interest" description="NGE-like">
    <location>
        <begin position="31"/>
        <end position="49"/>
    </location>
</feature>
<feature type="region of interest" description="Disordered" evidence="1">
    <location>
        <begin position="38"/>
        <end position="62"/>
    </location>
</feature>
<feature type="region of interest" description="NEI-like">
    <location>
        <begin position="52"/>
        <end position="64"/>
    </location>
</feature>
<feature type="region of interest" description="Melanin-concentrating hormone-like">
    <location>
        <begin position="68"/>
        <end position="86"/>
    </location>
</feature>
<organism>
    <name type="scientific">Homo sapiens</name>
    <name type="common">Human</name>
    <dbReference type="NCBI Taxonomy" id="9606"/>
    <lineage>
        <taxon>Eukaryota</taxon>
        <taxon>Metazoa</taxon>
        <taxon>Chordata</taxon>
        <taxon>Craniata</taxon>
        <taxon>Vertebrata</taxon>
        <taxon>Euteleostomi</taxon>
        <taxon>Mammalia</taxon>
        <taxon>Eutheria</taxon>
        <taxon>Euarchontoglires</taxon>
        <taxon>Primates</taxon>
        <taxon>Haplorrhini</taxon>
        <taxon>Catarrhini</taxon>
        <taxon>Hominidae</taxon>
        <taxon>Homo</taxon>
    </lineage>
</organism>
<proteinExistence type="uncertain"/>